<protein>
    <recommendedName>
        <fullName>Protocadherin gamma-A3</fullName>
        <shortName>PCDH-gamma-A3</shortName>
    </recommendedName>
</protein>
<organism>
    <name type="scientific">Homo sapiens</name>
    <name type="common">Human</name>
    <dbReference type="NCBI Taxonomy" id="9606"/>
    <lineage>
        <taxon>Eukaryota</taxon>
        <taxon>Metazoa</taxon>
        <taxon>Chordata</taxon>
        <taxon>Craniata</taxon>
        <taxon>Vertebrata</taxon>
        <taxon>Euteleostomi</taxon>
        <taxon>Mammalia</taxon>
        <taxon>Eutheria</taxon>
        <taxon>Euarchontoglires</taxon>
        <taxon>Primates</taxon>
        <taxon>Haplorrhini</taxon>
        <taxon>Catarrhini</taxon>
        <taxon>Hominidae</taxon>
        <taxon>Homo</taxon>
    </lineage>
</organism>
<evidence type="ECO:0000250" key="1"/>
<evidence type="ECO:0000255" key="2"/>
<evidence type="ECO:0000255" key="3">
    <source>
        <dbReference type="PROSITE-ProRule" id="PRU00043"/>
    </source>
</evidence>
<evidence type="ECO:0000256" key="4">
    <source>
        <dbReference type="SAM" id="MobiDB-lite"/>
    </source>
</evidence>
<evidence type="ECO:0000303" key="5">
    <source>
    </source>
</evidence>
<evidence type="ECO:0000305" key="6"/>
<name>PCDG3_HUMAN</name>
<gene>
    <name type="primary">PCDHGA3</name>
</gene>
<feature type="signal peptide" evidence="2">
    <location>
        <begin position="1"/>
        <end position="29"/>
    </location>
</feature>
<feature type="chain" id="PRO_0000003952" description="Protocadherin gamma-A3">
    <location>
        <begin position="30"/>
        <end position="932"/>
    </location>
</feature>
<feature type="topological domain" description="Extracellular" evidence="2">
    <location>
        <begin position="30"/>
        <end position="692"/>
    </location>
</feature>
<feature type="transmembrane region" description="Helical" evidence="2">
    <location>
        <begin position="693"/>
        <end position="713"/>
    </location>
</feature>
<feature type="topological domain" description="Cytoplasmic" evidence="2">
    <location>
        <begin position="714"/>
        <end position="932"/>
    </location>
</feature>
<feature type="domain" description="Cadherin 1" evidence="3">
    <location>
        <begin position="30"/>
        <end position="133"/>
    </location>
</feature>
<feature type="domain" description="Cadherin 2" evidence="3">
    <location>
        <begin position="134"/>
        <end position="242"/>
    </location>
</feature>
<feature type="domain" description="Cadherin 3" evidence="3">
    <location>
        <begin position="243"/>
        <end position="347"/>
    </location>
</feature>
<feature type="domain" description="Cadherin 4" evidence="3">
    <location>
        <begin position="348"/>
        <end position="452"/>
    </location>
</feature>
<feature type="domain" description="Cadherin 5" evidence="3">
    <location>
        <begin position="453"/>
        <end position="562"/>
    </location>
</feature>
<feature type="domain" description="Cadherin 6" evidence="3">
    <location>
        <begin position="570"/>
        <end position="682"/>
    </location>
</feature>
<feature type="region of interest" description="Disordered" evidence="4">
    <location>
        <begin position="805"/>
        <end position="841"/>
    </location>
</feature>
<feature type="region of interest" description="Disordered" evidence="4">
    <location>
        <begin position="902"/>
        <end position="932"/>
    </location>
</feature>
<feature type="compositionally biased region" description="Basic residues" evidence="4">
    <location>
        <begin position="922"/>
        <end position="932"/>
    </location>
</feature>
<feature type="glycosylation site" description="N-linked (GlcNAc...) asparagine" evidence="2">
    <location>
        <position position="265"/>
    </location>
</feature>
<feature type="glycosylation site" description="N-linked (GlcNAc...) asparagine" evidence="2">
    <location>
        <position position="419"/>
    </location>
</feature>
<feature type="glycosylation site" description="N-linked (GlcNAc...) asparagine" evidence="2">
    <location>
        <position position="545"/>
    </location>
</feature>
<feature type="glycosylation site" description="N-linked (GlcNAc...) asparagine" evidence="2">
    <location>
        <position position="685"/>
    </location>
</feature>
<feature type="splice variant" id="VSP_008663" description="In isoform 2." evidence="5">
    <original>QAPPNTDWRFSQAQRPGTSGS</original>
    <variation>VSLFISLIIKNKYENVVIIKL</variation>
    <location>
        <begin position="809"/>
        <end position="829"/>
    </location>
</feature>
<feature type="splice variant" id="VSP_008664" description="In isoform 2." evidence="5">
    <location>
        <begin position="830"/>
        <end position="932"/>
    </location>
</feature>
<feature type="sequence variant" id="VAR_055588" description="In dbSNP:rs11575947.">
    <original>P</original>
    <variation>S</variation>
    <location>
        <position position="79"/>
    </location>
</feature>
<feature type="sequence variant" id="VAR_055589" description="In dbSNP:rs11575948.">
    <original>I</original>
    <variation>L</variation>
    <location>
        <position position="154"/>
    </location>
</feature>
<feature type="sequence variant" id="VAR_059190" description="In dbSNP:rs7736541.">
    <original>A</original>
    <variation>V</variation>
    <location>
        <position position="743"/>
    </location>
</feature>
<feature type="sequence conflict" description="In Ref. 1; AAD43717." evidence="6" ref="1">
    <original>G</original>
    <variation>S</variation>
    <location>
        <position position="29"/>
    </location>
</feature>
<feature type="sequence conflict" description="In Ref. 1; AAD43717." evidence="6" ref="1">
    <original>V</original>
    <variation>I</variation>
    <location>
        <position position="646"/>
    </location>
</feature>
<feature type="sequence conflict" description="In Ref. 1; AAD43717." evidence="6" ref="1">
    <original>T</original>
    <variation>I</variation>
    <location>
        <position position="661"/>
    </location>
</feature>
<keyword id="KW-0025">Alternative splicing</keyword>
<keyword id="KW-0106">Calcium</keyword>
<keyword id="KW-0130">Cell adhesion</keyword>
<keyword id="KW-1003">Cell membrane</keyword>
<keyword id="KW-0325">Glycoprotein</keyword>
<keyword id="KW-0472">Membrane</keyword>
<keyword id="KW-1267">Proteomics identification</keyword>
<keyword id="KW-1185">Reference proteome</keyword>
<keyword id="KW-0677">Repeat</keyword>
<keyword id="KW-0732">Signal</keyword>
<keyword id="KW-0812">Transmembrane</keyword>
<keyword id="KW-1133">Transmembrane helix</keyword>
<comment type="function">
    <text>Potential calcium-dependent cell-adhesion protein. May be involved in the establishment and maintenance of specific neuronal connections in the brain.</text>
</comment>
<comment type="interaction">
    <interactant intactId="EBI-48413530">
        <id>Q9Y5H0</id>
    </interactant>
    <interactant intactId="EBI-12546446">
        <id>Q9Y5G4</id>
        <label>PCDHGA9</label>
    </interactant>
    <organismsDiffer>false</organismsDiffer>
    <experiments>2</experiments>
</comment>
<comment type="subcellular location">
    <subcellularLocation>
        <location evidence="1">Cell membrane</location>
        <topology evidence="1">Single-pass type I membrane protein</topology>
    </subcellularLocation>
</comment>
<comment type="alternative products">
    <event type="alternative splicing"/>
    <isoform>
        <id>Q9Y5H0-1</id>
        <name>1</name>
        <sequence type="displayed"/>
    </isoform>
    <isoform>
        <id>Q9Y5H0-2</id>
        <name>2</name>
        <name>Short</name>
        <sequence type="described" ref="VSP_008663 VSP_008664"/>
    </isoform>
</comment>
<sequence length="932" mass="100971">MTNCLSFRNGRGLALLCALLGTLCETGSGQIRYSVSEELDKGSFVGNIANDLGLEPRELAERGVRIVSRGRTQLFSLNPQSGSLVTAERIDREELCAQIPLCLVKINILVEDKLKIFEVEIEIKDINDNAPNFPTEELEIKIGELTVPGTRFPIKTAFDPDVGINSLQNYKLSPNDYFSLAVNSVSEGAKYPELVLERALDREKKEIHQLVLVASDGGDPVHSGNLHIQVIVLDANDNPPMFTQPEYRVSVWENVPVGTRLLTVNATDPDEGFNAQVSYILDKMPGKIAEIFHLNSVSGEVSILKSLDYEDAMFYEIKIEAQDGPGLLSRAKILVTVLDVNDNAPEITITSLTSSVPEEGTVGREIALIDVHDRDSGQNGQVEVFVLGNLPFKLEKSIDQYYRLVTATSLDREQISEYNISLRASDGGSPPLSTETHITLHVIDINDNPPTFPHLSYSAYIPENNPRGASIFSVTAQDPDSNNNARITYALTEDTLQGAPLSSFVSINSNTGVLYALRSFDYEQFRDLKLLVTASDSGNPPLSSNVSLNLFVLDQNDNAPEILYPALPTDGSTGVELAPRSAEPGYLVTKVVAVDRDSGQNAWLSYRLLKASEPGLFSVGLHTGEVRTARALLDRDALKQSLVVAVQDHGQPPLSATVTLTVAVADRIPDILADLGSLEPSAKPNDSDLTLYLVVAVAAVSCVFLAFVIVLLALRLRRWHKSRLLQASGGGLASTPGSHFVGADGVRAFLQTYSHEVSLTADSRKSHLIFPQPNYADTLISQESCEKSEPLLITQDLLEMKGDSNLLQQAPPNTDWRFSQAQRPGTSGSQNGDDTGTWPNNQFDTEMLQAMILASASEAADGSSTLGGGAGTMGLSARYGPQFTLQHVPDYRQNVYIPGSNATLTNAAGKRDGKAPAGGNGNKKKSGKKEKK</sequence>
<dbReference type="EMBL" id="AF152323">
    <property type="protein sequence ID" value="AAD43717.1"/>
    <property type="molecule type" value="mRNA"/>
</dbReference>
<dbReference type="EMBL" id="AF152510">
    <property type="protein sequence ID" value="AAD43770.1"/>
    <property type="molecule type" value="mRNA"/>
</dbReference>
<dbReference type="EMBL" id="AC005366">
    <property type="status" value="NOT_ANNOTATED_CDS"/>
    <property type="molecule type" value="Genomic_DNA"/>
</dbReference>
<dbReference type="EMBL" id="AC005618">
    <property type="status" value="NOT_ANNOTATED_CDS"/>
    <property type="molecule type" value="Genomic_DNA"/>
</dbReference>
<dbReference type="EMBL" id="AC008781">
    <property type="status" value="NOT_ANNOTATED_CDS"/>
    <property type="molecule type" value="Genomic_DNA"/>
</dbReference>
<dbReference type="CCDS" id="CCDS47290.1">
    <molecule id="Q9Y5H0-1"/>
</dbReference>
<dbReference type="CCDS" id="CCDS75329.1">
    <molecule id="Q9Y5H0-2"/>
</dbReference>
<dbReference type="RefSeq" id="NP_061739.2">
    <molecule id="Q9Y5H0-1"/>
    <property type="nucleotide sequence ID" value="NM_018916.3"/>
</dbReference>
<dbReference type="RefSeq" id="NP_114400.1">
    <molecule id="Q9Y5H0-2"/>
    <property type="nucleotide sequence ID" value="NM_032011.2"/>
</dbReference>
<dbReference type="SMR" id="Q9Y5H0"/>
<dbReference type="BioGRID" id="121052">
    <property type="interactions" value="9"/>
</dbReference>
<dbReference type="FunCoup" id="Q9Y5H0">
    <property type="interactions" value="7"/>
</dbReference>
<dbReference type="IntAct" id="Q9Y5H0">
    <property type="interactions" value="6"/>
</dbReference>
<dbReference type="STRING" id="9606.ENSP00000253812"/>
<dbReference type="GlyCosmos" id="Q9Y5H0">
    <property type="glycosylation" value="7 sites, 1 glycan"/>
</dbReference>
<dbReference type="GlyGen" id="Q9Y5H0">
    <property type="glycosylation" value="7 sites, 1 O-linked glycan (3 sites)"/>
</dbReference>
<dbReference type="iPTMnet" id="Q9Y5H0"/>
<dbReference type="PhosphoSitePlus" id="Q9Y5H0"/>
<dbReference type="BioMuta" id="PCDHGA3"/>
<dbReference type="DMDM" id="296439266"/>
<dbReference type="jPOST" id="Q9Y5H0"/>
<dbReference type="MassIVE" id="Q9Y5H0"/>
<dbReference type="PaxDb" id="9606-ENSP00000253812"/>
<dbReference type="PeptideAtlas" id="Q9Y5H0"/>
<dbReference type="ProteomicsDB" id="86381">
    <molecule id="Q9Y5H0-1"/>
</dbReference>
<dbReference type="ProteomicsDB" id="86382">
    <molecule id="Q9Y5H0-2"/>
</dbReference>
<dbReference type="TopDownProteomics" id="Q9Y5H0-2">
    <molecule id="Q9Y5H0-2"/>
</dbReference>
<dbReference type="Antibodypedia" id="57467">
    <property type="antibodies" value="232 antibodies from 16 providers"/>
</dbReference>
<dbReference type="DNASU" id="56112"/>
<dbReference type="Ensembl" id="ENST00000253812.8">
    <molecule id="Q9Y5H0-1"/>
    <property type="protein sequence ID" value="ENSP00000253812.7"/>
    <property type="gene ID" value="ENSG00000254245.3"/>
</dbReference>
<dbReference type="Ensembl" id="ENST00000619750.1">
    <molecule id="Q9Y5H0-2"/>
    <property type="protein sequence ID" value="ENSP00000479265.1"/>
    <property type="gene ID" value="ENSG00000254245.3"/>
</dbReference>
<dbReference type="GeneID" id="56112"/>
<dbReference type="KEGG" id="hsa:56112"/>
<dbReference type="MANE-Select" id="ENST00000253812.8">
    <property type="protein sequence ID" value="ENSP00000253812.7"/>
    <property type="RefSeq nucleotide sequence ID" value="NM_018916.4"/>
    <property type="RefSeq protein sequence ID" value="NP_061739.2"/>
</dbReference>
<dbReference type="UCSC" id="uc003ljm.3">
    <molecule id="Q9Y5H0-1"/>
    <property type="organism name" value="human"/>
</dbReference>
<dbReference type="AGR" id="HGNC:8701"/>
<dbReference type="CTD" id="56112"/>
<dbReference type="DisGeNET" id="56112"/>
<dbReference type="GeneCards" id="PCDHGA3"/>
<dbReference type="HGNC" id="HGNC:8701">
    <property type="gene designation" value="PCDHGA3"/>
</dbReference>
<dbReference type="HPA" id="ENSG00000254245">
    <property type="expression patterns" value="Tissue enhanced (brain)"/>
</dbReference>
<dbReference type="MalaCards" id="PCDHGA3"/>
<dbReference type="MIM" id="604968">
    <property type="type" value="gene"/>
</dbReference>
<dbReference type="MIM" id="606290">
    <property type="type" value="gene"/>
</dbReference>
<dbReference type="neXtProt" id="NX_Q9Y5H0"/>
<dbReference type="OpenTargets" id="ENSG00000254245"/>
<dbReference type="PharmGKB" id="PA33049"/>
<dbReference type="VEuPathDB" id="HostDB:ENSG00000254245"/>
<dbReference type="eggNOG" id="KOG3594">
    <property type="taxonomic scope" value="Eukaryota"/>
</dbReference>
<dbReference type="GeneTree" id="ENSGT00940000164906"/>
<dbReference type="HOGENOM" id="CLU_006480_3_0_1"/>
<dbReference type="InParanoid" id="Q9Y5H0"/>
<dbReference type="OMA" id="SMSTHIT"/>
<dbReference type="OrthoDB" id="6252479at2759"/>
<dbReference type="PAN-GO" id="Q9Y5H0">
    <property type="GO annotations" value="2 GO annotations based on evolutionary models"/>
</dbReference>
<dbReference type="PhylomeDB" id="Q9Y5H0"/>
<dbReference type="TreeFam" id="TF332299"/>
<dbReference type="PathwayCommons" id="Q9Y5H0"/>
<dbReference type="SIGNOR" id="Q9Y5H0"/>
<dbReference type="BioGRID-ORCS" id="56112">
    <property type="hits" value="13 hits in 1100 CRISPR screens"/>
</dbReference>
<dbReference type="GenomeRNAi" id="56112"/>
<dbReference type="Pharos" id="Q9Y5H0">
    <property type="development level" value="Tbio"/>
</dbReference>
<dbReference type="PRO" id="PR:Q9Y5H0"/>
<dbReference type="Proteomes" id="UP000005640">
    <property type="component" value="Chromosome 5"/>
</dbReference>
<dbReference type="RNAct" id="Q9Y5H0">
    <property type="molecule type" value="protein"/>
</dbReference>
<dbReference type="Bgee" id="ENSG00000254245">
    <property type="expression patterns" value="Expressed in stromal cell of endometrium and 93 other cell types or tissues"/>
</dbReference>
<dbReference type="ExpressionAtlas" id="Q9Y5H0">
    <property type="expression patterns" value="baseline and differential"/>
</dbReference>
<dbReference type="GO" id="GO:0005886">
    <property type="term" value="C:plasma membrane"/>
    <property type="evidence" value="ECO:0000318"/>
    <property type="project" value="GO_Central"/>
</dbReference>
<dbReference type="GO" id="GO:0005509">
    <property type="term" value="F:calcium ion binding"/>
    <property type="evidence" value="ECO:0007669"/>
    <property type="project" value="InterPro"/>
</dbReference>
<dbReference type="GO" id="GO:0007155">
    <property type="term" value="P:cell adhesion"/>
    <property type="evidence" value="ECO:0000318"/>
    <property type="project" value="GO_Central"/>
</dbReference>
<dbReference type="GO" id="GO:0008333">
    <property type="term" value="P:endosome to lysosome transport"/>
    <property type="evidence" value="ECO:0007669"/>
    <property type="project" value="Ensembl"/>
</dbReference>
<dbReference type="GO" id="GO:0007156">
    <property type="term" value="P:homophilic cell adhesion via plasma membrane adhesion molecules"/>
    <property type="evidence" value="ECO:0007669"/>
    <property type="project" value="InterPro"/>
</dbReference>
<dbReference type="GO" id="GO:0060989">
    <property type="term" value="P:lipid tube assembly involved in organelle fusion"/>
    <property type="evidence" value="ECO:0007669"/>
    <property type="project" value="Ensembl"/>
</dbReference>
<dbReference type="GO" id="GO:0007399">
    <property type="term" value="P:nervous system development"/>
    <property type="evidence" value="ECO:0007669"/>
    <property type="project" value="UniProtKB-ARBA"/>
</dbReference>
<dbReference type="CDD" id="cd11304">
    <property type="entry name" value="Cadherin_repeat"/>
    <property type="match status" value="6"/>
</dbReference>
<dbReference type="FunFam" id="2.60.40.60:FF:000004">
    <property type="entry name" value="Protocadherin 1 gamma 2"/>
    <property type="match status" value="1"/>
</dbReference>
<dbReference type="FunFam" id="2.60.40.60:FF:000001">
    <property type="entry name" value="Protocadherin alpha 2"/>
    <property type="match status" value="1"/>
</dbReference>
<dbReference type="FunFam" id="2.60.40.60:FF:000002">
    <property type="entry name" value="Protocadherin alpha 2"/>
    <property type="match status" value="1"/>
</dbReference>
<dbReference type="FunFam" id="2.60.40.60:FF:000006">
    <property type="entry name" value="Protocadherin alpha 2"/>
    <property type="match status" value="1"/>
</dbReference>
<dbReference type="FunFam" id="2.60.40.60:FF:000129">
    <property type="entry name" value="protocadherin alpha-C2 isoform X1"/>
    <property type="match status" value="1"/>
</dbReference>
<dbReference type="FunFam" id="2.60.40.60:FF:000018">
    <property type="entry name" value="Protocadherin gamma c3"/>
    <property type="match status" value="1"/>
</dbReference>
<dbReference type="Gene3D" id="2.60.40.60">
    <property type="entry name" value="Cadherins"/>
    <property type="match status" value="6"/>
</dbReference>
<dbReference type="InterPro" id="IPR002126">
    <property type="entry name" value="Cadherin-like_dom"/>
</dbReference>
<dbReference type="InterPro" id="IPR015919">
    <property type="entry name" value="Cadherin-like_sf"/>
</dbReference>
<dbReference type="InterPro" id="IPR032455">
    <property type="entry name" value="Cadherin_C"/>
</dbReference>
<dbReference type="InterPro" id="IPR031904">
    <property type="entry name" value="Cadherin_CBD"/>
</dbReference>
<dbReference type="InterPro" id="IPR020894">
    <property type="entry name" value="Cadherin_CS"/>
</dbReference>
<dbReference type="InterPro" id="IPR013164">
    <property type="entry name" value="Cadherin_N"/>
</dbReference>
<dbReference type="InterPro" id="IPR050174">
    <property type="entry name" value="Protocadherin/Cadherin-CA"/>
</dbReference>
<dbReference type="PANTHER" id="PTHR24028">
    <property type="entry name" value="CADHERIN-87A"/>
    <property type="match status" value="1"/>
</dbReference>
<dbReference type="PANTHER" id="PTHR24028:SF234">
    <property type="entry name" value="PROTOCADHERIN GAMMA-A3"/>
    <property type="match status" value="1"/>
</dbReference>
<dbReference type="Pfam" id="PF00028">
    <property type="entry name" value="Cadherin"/>
    <property type="match status" value="4"/>
</dbReference>
<dbReference type="Pfam" id="PF08266">
    <property type="entry name" value="Cadherin_2"/>
    <property type="match status" value="1"/>
</dbReference>
<dbReference type="Pfam" id="PF16492">
    <property type="entry name" value="Cadherin_C_2"/>
    <property type="match status" value="1"/>
</dbReference>
<dbReference type="Pfam" id="PF15974">
    <property type="entry name" value="Cadherin_tail"/>
    <property type="match status" value="1"/>
</dbReference>
<dbReference type="PRINTS" id="PR00205">
    <property type="entry name" value="CADHERIN"/>
</dbReference>
<dbReference type="SMART" id="SM00112">
    <property type="entry name" value="CA"/>
    <property type="match status" value="6"/>
</dbReference>
<dbReference type="SUPFAM" id="SSF49313">
    <property type="entry name" value="Cadherin-like"/>
    <property type="match status" value="6"/>
</dbReference>
<dbReference type="PROSITE" id="PS00232">
    <property type="entry name" value="CADHERIN_1"/>
    <property type="match status" value="5"/>
</dbReference>
<dbReference type="PROSITE" id="PS50268">
    <property type="entry name" value="CADHERIN_2"/>
    <property type="match status" value="6"/>
</dbReference>
<accession>Q9Y5H0</accession>
<accession>Q9Y5D4</accession>
<reference key="1">
    <citation type="journal article" date="1999" name="Cell">
        <title>A striking organization of a large family of human neural cadherin-like cell adhesion genes.</title>
        <authorList>
            <person name="Wu Q."/>
            <person name="Maniatis T."/>
        </authorList>
    </citation>
    <scope>NUCLEOTIDE SEQUENCE [MRNA] (ISOFORMS 1 AND 2)</scope>
    <source>
        <tissue>Brain</tissue>
    </source>
</reference>
<reference key="2">
    <citation type="journal article" date="2004" name="Nature">
        <title>The DNA sequence and comparative analysis of human chromosome 5.</title>
        <authorList>
            <person name="Schmutz J."/>
            <person name="Martin J."/>
            <person name="Terry A."/>
            <person name="Couronne O."/>
            <person name="Grimwood J."/>
            <person name="Lowry S."/>
            <person name="Gordon L.A."/>
            <person name="Scott D."/>
            <person name="Xie G."/>
            <person name="Huang W."/>
            <person name="Hellsten U."/>
            <person name="Tran-Gyamfi M."/>
            <person name="She X."/>
            <person name="Prabhakar S."/>
            <person name="Aerts A."/>
            <person name="Altherr M."/>
            <person name="Bajorek E."/>
            <person name="Black S."/>
            <person name="Branscomb E."/>
            <person name="Caoile C."/>
            <person name="Challacombe J.F."/>
            <person name="Chan Y.M."/>
            <person name="Denys M."/>
            <person name="Detter J.C."/>
            <person name="Escobar J."/>
            <person name="Flowers D."/>
            <person name="Fotopulos D."/>
            <person name="Glavina T."/>
            <person name="Gomez M."/>
            <person name="Gonzales E."/>
            <person name="Goodstein D."/>
            <person name="Grigoriev I."/>
            <person name="Groza M."/>
            <person name="Hammon N."/>
            <person name="Hawkins T."/>
            <person name="Haydu L."/>
            <person name="Israni S."/>
            <person name="Jett J."/>
            <person name="Kadner K."/>
            <person name="Kimball H."/>
            <person name="Kobayashi A."/>
            <person name="Lopez F."/>
            <person name="Lou Y."/>
            <person name="Martinez D."/>
            <person name="Medina C."/>
            <person name="Morgan J."/>
            <person name="Nandkeshwar R."/>
            <person name="Noonan J.P."/>
            <person name="Pitluck S."/>
            <person name="Pollard M."/>
            <person name="Predki P."/>
            <person name="Priest J."/>
            <person name="Ramirez L."/>
            <person name="Retterer J."/>
            <person name="Rodriguez A."/>
            <person name="Rogers S."/>
            <person name="Salamov A."/>
            <person name="Salazar A."/>
            <person name="Thayer N."/>
            <person name="Tice H."/>
            <person name="Tsai M."/>
            <person name="Ustaszewska A."/>
            <person name="Vo N."/>
            <person name="Wheeler J."/>
            <person name="Wu K."/>
            <person name="Yang J."/>
            <person name="Dickson M."/>
            <person name="Cheng J.-F."/>
            <person name="Eichler E.E."/>
            <person name="Olsen A."/>
            <person name="Pennacchio L.A."/>
            <person name="Rokhsar D.S."/>
            <person name="Richardson P."/>
            <person name="Lucas S.M."/>
            <person name="Myers R.M."/>
            <person name="Rubin E.M."/>
        </authorList>
    </citation>
    <scope>NUCLEOTIDE SEQUENCE [LARGE SCALE GENOMIC DNA]</scope>
</reference>
<proteinExistence type="evidence at protein level"/>